<name>DNMT1_RAT</name>
<dbReference type="EC" id="2.1.1.37"/>
<dbReference type="EMBL" id="AB012214">
    <property type="protein sequence ID" value="BAA37118.1"/>
    <property type="molecule type" value="mRNA"/>
</dbReference>
<dbReference type="EMBL" id="AF116344">
    <property type="protein sequence ID" value="AAD32541.1"/>
    <property type="molecule type" value="mRNA"/>
</dbReference>
<dbReference type="EMBL" id="AF116345">
    <property type="protein sequence ID" value="AAD32542.1"/>
    <property type="molecule type" value="Genomic_DNA"/>
</dbReference>
<dbReference type="EMBL" id="D64060">
    <property type="protein sequence ID" value="BAA20854.1"/>
    <property type="molecule type" value="mRNA"/>
</dbReference>
<dbReference type="EMBL" id="AH007612">
    <property type="protein sequence ID" value="AAD28102.1"/>
    <property type="molecule type" value="Genomic_DNA"/>
</dbReference>
<dbReference type="PIR" id="JE0378">
    <property type="entry name" value="JE0378"/>
</dbReference>
<dbReference type="SMR" id="Q9Z330"/>
<dbReference type="FunCoup" id="Q9Z330">
    <property type="interactions" value="2051"/>
</dbReference>
<dbReference type="IntAct" id="Q9Z330">
    <property type="interactions" value="2"/>
</dbReference>
<dbReference type="STRING" id="10116.ENSRNOP00000063831"/>
<dbReference type="REBASE" id="11410">
    <property type="entry name" value="M.RraDnmtI"/>
</dbReference>
<dbReference type="REBASE" id="3019">
    <property type="entry name" value="M.RnoDnmt1"/>
</dbReference>
<dbReference type="CarbonylDB" id="Q9Z330"/>
<dbReference type="iPTMnet" id="Q9Z330"/>
<dbReference type="PhosphoSitePlus" id="Q9Z330"/>
<dbReference type="jPOST" id="Q9Z330"/>
<dbReference type="PaxDb" id="10116-ENSRNOP00000063831"/>
<dbReference type="UCSC" id="RGD:620979">
    <molecule id="Q9Z330-1"/>
    <property type="organism name" value="rat"/>
</dbReference>
<dbReference type="AGR" id="RGD:620979"/>
<dbReference type="RGD" id="620979">
    <property type="gene designation" value="Dnmt1"/>
</dbReference>
<dbReference type="eggNOG" id="ENOG502QPKK">
    <property type="taxonomic scope" value="Eukaryota"/>
</dbReference>
<dbReference type="InParanoid" id="Q9Z330"/>
<dbReference type="PhylomeDB" id="Q9Z330"/>
<dbReference type="BioCyc" id="MetaCyc:MONOMER-8581"/>
<dbReference type="BRENDA" id="2.1.1.37">
    <property type="organism ID" value="5301"/>
</dbReference>
<dbReference type="Reactome" id="R-RNO-212300">
    <property type="pathway name" value="PRC2 methylates histones and DNA"/>
</dbReference>
<dbReference type="Reactome" id="R-RNO-4655427">
    <property type="pathway name" value="SUMOylation of DNA methylation proteins"/>
</dbReference>
<dbReference type="PRO" id="PR:Q9Z330"/>
<dbReference type="Proteomes" id="UP000002494">
    <property type="component" value="Unplaced"/>
</dbReference>
<dbReference type="GO" id="GO:0001674">
    <property type="term" value="C:female germ cell nucleus"/>
    <property type="evidence" value="ECO:0000266"/>
    <property type="project" value="RGD"/>
</dbReference>
<dbReference type="GO" id="GO:0043073">
    <property type="term" value="C:germ cell nucleus"/>
    <property type="evidence" value="ECO:0000266"/>
    <property type="project" value="RGD"/>
</dbReference>
<dbReference type="GO" id="GO:0000792">
    <property type="term" value="C:heterochromatin"/>
    <property type="evidence" value="ECO:0000266"/>
    <property type="project" value="RGD"/>
</dbReference>
<dbReference type="GO" id="GO:0005634">
    <property type="term" value="C:nucleus"/>
    <property type="evidence" value="ECO:0000314"/>
    <property type="project" value="RGD"/>
</dbReference>
<dbReference type="GO" id="GO:0005721">
    <property type="term" value="C:pericentric heterochromatin"/>
    <property type="evidence" value="ECO:0000266"/>
    <property type="project" value="RGD"/>
</dbReference>
<dbReference type="GO" id="GO:0032991">
    <property type="term" value="C:protein-containing complex"/>
    <property type="evidence" value="ECO:0000314"/>
    <property type="project" value="RGD"/>
</dbReference>
<dbReference type="GO" id="GO:0005657">
    <property type="term" value="C:replication fork"/>
    <property type="evidence" value="ECO:0000266"/>
    <property type="project" value="RGD"/>
</dbReference>
<dbReference type="GO" id="GO:0003682">
    <property type="term" value="F:chromatin binding"/>
    <property type="evidence" value="ECO:0000266"/>
    <property type="project" value="RGD"/>
</dbReference>
<dbReference type="GO" id="GO:0003886">
    <property type="term" value="F:DNA (cytosine-5-)-methyltransferase activity"/>
    <property type="evidence" value="ECO:0000314"/>
    <property type="project" value="RGD"/>
</dbReference>
<dbReference type="GO" id="GO:0003677">
    <property type="term" value="F:DNA binding"/>
    <property type="evidence" value="ECO:0000266"/>
    <property type="project" value="RGD"/>
</dbReference>
<dbReference type="GO" id="GO:0009008">
    <property type="term" value="F:DNA-methyltransferase activity"/>
    <property type="evidence" value="ECO:0000266"/>
    <property type="project" value="RGD"/>
</dbReference>
<dbReference type="GO" id="GO:0042826">
    <property type="term" value="F:histone deacetylase binding"/>
    <property type="evidence" value="ECO:0000353"/>
    <property type="project" value="RGD"/>
</dbReference>
<dbReference type="GO" id="GO:0106222">
    <property type="term" value="F:lncRNA binding"/>
    <property type="evidence" value="ECO:0000266"/>
    <property type="project" value="RGD"/>
</dbReference>
<dbReference type="GO" id="GO:0008327">
    <property type="term" value="F:methyl-CpG binding"/>
    <property type="evidence" value="ECO:0000266"/>
    <property type="project" value="RGD"/>
</dbReference>
<dbReference type="GO" id="GO:0008168">
    <property type="term" value="F:methyltransferase activity"/>
    <property type="evidence" value="ECO:0000266"/>
    <property type="project" value="RGD"/>
</dbReference>
<dbReference type="GO" id="GO:0030331">
    <property type="term" value="F:nuclear estrogen receptor binding"/>
    <property type="evidence" value="ECO:0000353"/>
    <property type="project" value="RGD"/>
</dbReference>
<dbReference type="GO" id="GO:1990841">
    <property type="term" value="F:promoter-specific chromatin binding"/>
    <property type="evidence" value="ECO:0000250"/>
    <property type="project" value="UniProtKB"/>
</dbReference>
<dbReference type="GO" id="GO:0019904">
    <property type="term" value="F:protein domain specific binding"/>
    <property type="evidence" value="ECO:0000353"/>
    <property type="project" value="RGD"/>
</dbReference>
<dbReference type="GO" id="GO:0003723">
    <property type="term" value="F:RNA binding"/>
    <property type="evidence" value="ECO:0000266"/>
    <property type="project" value="RGD"/>
</dbReference>
<dbReference type="GO" id="GO:0008757">
    <property type="term" value="F:S-adenosylmethionine-dependent methyltransferase activity"/>
    <property type="evidence" value="ECO:0000304"/>
    <property type="project" value="RGD"/>
</dbReference>
<dbReference type="GO" id="GO:0008270">
    <property type="term" value="F:zinc ion binding"/>
    <property type="evidence" value="ECO:0000266"/>
    <property type="project" value="RGD"/>
</dbReference>
<dbReference type="GO" id="GO:0071230">
    <property type="term" value="P:cellular response to amino acid stimulus"/>
    <property type="evidence" value="ECO:0000266"/>
    <property type="project" value="RGD"/>
</dbReference>
<dbReference type="GO" id="GO:1903926">
    <property type="term" value="P:cellular response to bisphenol A"/>
    <property type="evidence" value="ECO:0000266"/>
    <property type="project" value="RGD"/>
</dbReference>
<dbReference type="GO" id="GO:0071284">
    <property type="term" value="P:cellular response to lead ion"/>
    <property type="evidence" value="ECO:0000270"/>
    <property type="project" value="RGD"/>
</dbReference>
<dbReference type="GO" id="GO:1990090">
    <property type="term" value="P:cellular response to nerve growth factor stimulus"/>
    <property type="evidence" value="ECO:0000270"/>
    <property type="project" value="RGD"/>
</dbReference>
<dbReference type="GO" id="GO:0036120">
    <property type="term" value="P:cellular response to platelet-derived growth factor stimulus"/>
    <property type="evidence" value="ECO:0000270"/>
    <property type="project" value="RGD"/>
</dbReference>
<dbReference type="GO" id="GO:0071560">
    <property type="term" value="P:cellular response to transforming growth factor beta stimulus"/>
    <property type="evidence" value="ECO:0000315"/>
    <property type="project" value="RGD"/>
</dbReference>
<dbReference type="GO" id="GO:0141119">
    <property type="term" value="P:chromosomal DNA methylation maintenance following DNA replication"/>
    <property type="evidence" value="ECO:0000266"/>
    <property type="project" value="RGD"/>
</dbReference>
<dbReference type="GO" id="GO:0006346">
    <property type="term" value="P:DNA methylation-dependent constitutive heterochromatin formation"/>
    <property type="evidence" value="ECO:0000266"/>
    <property type="project" value="RGD"/>
</dbReference>
<dbReference type="GO" id="GO:0006351">
    <property type="term" value="P:DNA-templated transcription"/>
    <property type="evidence" value="ECO:0000266"/>
    <property type="project" value="RGD"/>
</dbReference>
<dbReference type="GO" id="GO:0043045">
    <property type="term" value="P:epigenetic programming of gene expression"/>
    <property type="evidence" value="ECO:0000266"/>
    <property type="project" value="RGD"/>
</dbReference>
<dbReference type="GO" id="GO:0032259">
    <property type="term" value="P:methylation"/>
    <property type="evidence" value="ECO:0007669"/>
    <property type="project" value="UniProtKB-KW"/>
</dbReference>
<dbReference type="GO" id="GO:0045892">
    <property type="term" value="P:negative regulation of DNA-templated transcription"/>
    <property type="evidence" value="ECO:0000266"/>
    <property type="project" value="RGD"/>
</dbReference>
<dbReference type="GO" id="GO:0010629">
    <property type="term" value="P:negative regulation of gene expression"/>
    <property type="evidence" value="ECO:0000266"/>
    <property type="project" value="RGD"/>
</dbReference>
<dbReference type="GO" id="GO:0044027">
    <property type="term" value="P:negative regulation of gene expression via chromosomal CpG island methylation"/>
    <property type="evidence" value="ECO:0000314"/>
    <property type="project" value="RGD"/>
</dbReference>
<dbReference type="GO" id="GO:0000122">
    <property type="term" value="P:negative regulation of transcription by RNA polymerase II"/>
    <property type="evidence" value="ECO:0000266"/>
    <property type="project" value="RGD"/>
</dbReference>
<dbReference type="GO" id="GO:1905460">
    <property type="term" value="P:negative regulation of vascular associated smooth muscle cell apoptotic process"/>
    <property type="evidence" value="ECO:0000266"/>
    <property type="project" value="RGD"/>
</dbReference>
<dbReference type="GO" id="GO:1905931">
    <property type="term" value="P:negative regulation of vascular associated smooth muscle cell differentiation involved in phenotypic switching"/>
    <property type="evidence" value="ECO:0000266"/>
    <property type="project" value="RGD"/>
</dbReference>
<dbReference type="GO" id="GO:0030182">
    <property type="term" value="P:neuron differentiation"/>
    <property type="evidence" value="ECO:0000270"/>
    <property type="project" value="RGD"/>
</dbReference>
<dbReference type="GO" id="GO:0010628">
    <property type="term" value="P:positive regulation of gene expression"/>
    <property type="evidence" value="ECO:0000266"/>
    <property type="project" value="RGD"/>
</dbReference>
<dbReference type="GO" id="GO:1904707">
    <property type="term" value="P:positive regulation of vascular associated smooth muscle cell proliferation"/>
    <property type="evidence" value="ECO:0000266"/>
    <property type="project" value="RGD"/>
</dbReference>
<dbReference type="GO" id="GO:0042127">
    <property type="term" value="P:regulation of cell population proliferation"/>
    <property type="evidence" value="ECO:0000266"/>
    <property type="project" value="RGD"/>
</dbReference>
<dbReference type="GO" id="GO:0010468">
    <property type="term" value="P:regulation of gene expression"/>
    <property type="evidence" value="ECO:0000266"/>
    <property type="project" value="RGD"/>
</dbReference>
<dbReference type="GO" id="GO:0014823">
    <property type="term" value="P:response to activity"/>
    <property type="evidence" value="ECO:0000270"/>
    <property type="project" value="RGD"/>
</dbReference>
<dbReference type="GO" id="GO:0097305">
    <property type="term" value="P:response to alcohol"/>
    <property type="evidence" value="ECO:0000270"/>
    <property type="project" value="RGD"/>
</dbReference>
<dbReference type="GO" id="GO:1903925">
    <property type="term" value="P:response to bisphenol A"/>
    <property type="evidence" value="ECO:0000270"/>
    <property type="project" value="RGD"/>
</dbReference>
<dbReference type="GO" id="GO:0031000">
    <property type="term" value="P:response to caffeine"/>
    <property type="evidence" value="ECO:0000270"/>
    <property type="project" value="RGD"/>
</dbReference>
<dbReference type="GO" id="GO:0032355">
    <property type="term" value="P:response to estradiol"/>
    <property type="evidence" value="ECO:0000270"/>
    <property type="project" value="RGD"/>
</dbReference>
<dbReference type="GO" id="GO:0045471">
    <property type="term" value="P:response to ethanol"/>
    <property type="evidence" value="ECO:0000270"/>
    <property type="project" value="RGD"/>
</dbReference>
<dbReference type="GO" id="GO:0010212">
    <property type="term" value="P:response to ionizing radiation"/>
    <property type="evidence" value="ECO:0000270"/>
    <property type="project" value="RGD"/>
</dbReference>
<dbReference type="GO" id="GO:0010288">
    <property type="term" value="P:response to lead ion"/>
    <property type="evidence" value="ECO:0000270"/>
    <property type="project" value="RGD"/>
</dbReference>
<dbReference type="GO" id="GO:0032496">
    <property type="term" value="P:response to lipopolysaccharide"/>
    <property type="evidence" value="ECO:0000270"/>
    <property type="project" value="RGD"/>
</dbReference>
<dbReference type="GO" id="GO:0031667">
    <property type="term" value="P:response to nutrient levels"/>
    <property type="evidence" value="ECO:0000270"/>
    <property type="project" value="RGD"/>
</dbReference>
<dbReference type="GO" id="GO:0033574">
    <property type="term" value="P:response to testosterone"/>
    <property type="evidence" value="ECO:0000270"/>
    <property type="project" value="RGD"/>
</dbReference>
<dbReference type="GO" id="GO:0009636">
    <property type="term" value="P:response to toxic substance"/>
    <property type="evidence" value="ECO:0000270"/>
    <property type="project" value="RGD"/>
</dbReference>
<dbReference type="GO" id="GO:0033189">
    <property type="term" value="P:response to vitamin A"/>
    <property type="evidence" value="ECO:0000270"/>
    <property type="project" value="RGD"/>
</dbReference>
<dbReference type="GO" id="GO:0009410">
    <property type="term" value="P:response to xenobiotic stimulus"/>
    <property type="evidence" value="ECO:0000314"/>
    <property type="project" value="RGD"/>
</dbReference>
<dbReference type="CDD" id="cd04760">
    <property type="entry name" value="BAH_Dnmt1_I"/>
    <property type="match status" value="1"/>
</dbReference>
<dbReference type="CDD" id="cd04711">
    <property type="entry name" value="BAH_Dnmt1_II"/>
    <property type="match status" value="1"/>
</dbReference>
<dbReference type="FunFam" id="1.10.10.2230:FF:000001">
    <property type="entry name" value="DNA (cytosine-5)-methyltransferase"/>
    <property type="match status" value="1"/>
</dbReference>
<dbReference type="FunFam" id="2.30.30.490:FF:000004">
    <property type="entry name" value="DNA (cytosine-5)-methyltransferase"/>
    <property type="match status" value="1"/>
</dbReference>
<dbReference type="FunFam" id="2.30.30.490:FF:000006">
    <property type="entry name" value="DNA (cytosine-5)-methyltransferase"/>
    <property type="match status" value="1"/>
</dbReference>
<dbReference type="FunFam" id="3.40.50.150:FF:000036">
    <property type="entry name" value="DNA (cytosine-5)-methyltransferase"/>
    <property type="match status" value="1"/>
</dbReference>
<dbReference type="FunFam" id="3.90.120.10:FF:000001">
    <property type="entry name" value="DNA (cytosine-5)-methyltransferase"/>
    <property type="match status" value="1"/>
</dbReference>
<dbReference type="Gene3D" id="1.10.10.2230">
    <property type="match status" value="1"/>
</dbReference>
<dbReference type="Gene3D" id="2.30.30.490">
    <property type="match status" value="2"/>
</dbReference>
<dbReference type="Gene3D" id="3.90.120.10">
    <property type="entry name" value="DNA Methylase, subunit A, domain 2"/>
    <property type="match status" value="1"/>
</dbReference>
<dbReference type="Gene3D" id="3.40.50.150">
    <property type="entry name" value="Vaccinia Virus protein VP39"/>
    <property type="match status" value="1"/>
</dbReference>
<dbReference type="InterPro" id="IPR001025">
    <property type="entry name" value="BAH_dom"/>
</dbReference>
<dbReference type="InterPro" id="IPR043151">
    <property type="entry name" value="BAH_sf"/>
</dbReference>
<dbReference type="InterPro" id="IPR050390">
    <property type="entry name" value="C5-Methyltransferase"/>
</dbReference>
<dbReference type="InterPro" id="IPR018117">
    <property type="entry name" value="C5_DNA_meth_AS"/>
</dbReference>
<dbReference type="InterPro" id="IPR001525">
    <property type="entry name" value="C5_MeTfrase"/>
</dbReference>
<dbReference type="InterPro" id="IPR031303">
    <property type="entry name" value="C5_meth_CS"/>
</dbReference>
<dbReference type="InterPro" id="IPR022702">
    <property type="entry name" value="Cytosine_MeTrfase1_RFD"/>
</dbReference>
<dbReference type="InterPro" id="IPR010506">
    <property type="entry name" value="DMAP1-bd"/>
</dbReference>
<dbReference type="InterPro" id="IPR017198">
    <property type="entry name" value="DNMT1-like"/>
</dbReference>
<dbReference type="InterPro" id="IPR029063">
    <property type="entry name" value="SAM-dependent_MTases_sf"/>
</dbReference>
<dbReference type="InterPro" id="IPR002857">
    <property type="entry name" value="Znf_CXXC"/>
</dbReference>
<dbReference type="PANTHER" id="PTHR10629">
    <property type="entry name" value="CYTOSINE-SPECIFIC METHYLTRANSFERASE"/>
    <property type="match status" value="1"/>
</dbReference>
<dbReference type="PANTHER" id="PTHR10629:SF52">
    <property type="entry name" value="DNA (CYTOSINE-5)-METHYLTRANSFERASE 1"/>
    <property type="match status" value="1"/>
</dbReference>
<dbReference type="Pfam" id="PF01426">
    <property type="entry name" value="BAH"/>
    <property type="match status" value="2"/>
</dbReference>
<dbReference type="Pfam" id="PF06464">
    <property type="entry name" value="DMAP_binding"/>
    <property type="match status" value="1"/>
</dbReference>
<dbReference type="Pfam" id="PF00145">
    <property type="entry name" value="DNA_methylase"/>
    <property type="match status" value="1"/>
</dbReference>
<dbReference type="Pfam" id="PF12047">
    <property type="entry name" value="DNMT1-RFD"/>
    <property type="match status" value="1"/>
</dbReference>
<dbReference type="Pfam" id="PF02008">
    <property type="entry name" value="zf-CXXC"/>
    <property type="match status" value="1"/>
</dbReference>
<dbReference type="PIRSF" id="PIRSF037404">
    <property type="entry name" value="DNMT1"/>
    <property type="match status" value="1"/>
</dbReference>
<dbReference type="PRINTS" id="PR00105">
    <property type="entry name" value="C5METTRFRASE"/>
</dbReference>
<dbReference type="SMART" id="SM00439">
    <property type="entry name" value="BAH"/>
    <property type="match status" value="2"/>
</dbReference>
<dbReference type="SMART" id="SM01137">
    <property type="entry name" value="DMAP_binding"/>
    <property type="match status" value="1"/>
</dbReference>
<dbReference type="SUPFAM" id="SSF53335">
    <property type="entry name" value="S-adenosyl-L-methionine-dependent methyltransferases"/>
    <property type="match status" value="1"/>
</dbReference>
<dbReference type="PROSITE" id="PS51038">
    <property type="entry name" value="BAH"/>
    <property type="match status" value="2"/>
</dbReference>
<dbReference type="PROSITE" id="PS00094">
    <property type="entry name" value="C5_MTASE_1"/>
    <property type="match status" value="1"/>
</dbReference>
<dbReference type="PROSITE" id="PS00095">
    <property type="entry name" value="C5_MTASE_2"/>
    <property type="match status" value="1"/>
</dbReference>
<dbReference type="PROSITE" id="PS51912">
    <property type="entry name" value="DMAP1_BIND"/>
    <property type="match status" value="1"/>
</dbReference>
<dbReference type="PROSITE" id="PS51679">
    <property type="entry name" value="SAM_MT_C5"/>
    <property type="match status" value="1"/>
</dbReference>
<dbReference type="PROSITE" id="PS51058">
    <property type="entry name" value="ZF_CXXC"/>
    <property type="match status" value="1"/>
</dbReference>
<organism>
    <name type="scientific">Rattus norvegicus</name>
    <name type="common">Rat</name>
    <dbReference type="NCBI Taxonomy" id="10116"/>
    <lineage>
        <taxon>Eukaryota</taxon>
        <taxon>Metazoa</taxon>
        <taxon>Chordata</taxon>
        <taxon>Craniata</taxon>
        <taxon>Vertebrata</taxon>
        <taxon>Euteleostomi</taxon>
        <taxon>Mammalia</taxon>
        <taxon>Eutheria</taxon>
        <taxon>Euarchontoglires</taxon>
        <taxon>Glires</taxon>
        <taxon>Rodentia</taxon>
        <taxon>Myomorpha</taxon>
        <taxon>Muroidea</taxon>
        <taxon>Muridae</taxon>
        <taxon>Murinae</taxon>
        <taxon>Rattus</taxon>
    </lineage>
</organism>
<keyword id="KW-0007">Acetylation</keyword>
<keyword id="KW-0010">Activator</keyword>
<keyword id="KW-0025">Alternative splicing</keyword>
<keyword id="KW-0156">Chromatin regulator</keyword>
<keyword id="KW-0238">DNA-binding</keyword>
<keyword id="KW-1017">Isopeptide bond</keyword>
<keyword id="KW-0479">Metal-binding</keyword>
<keyword id="KW-0488">Methylation</keyword>
<keyword id="KW-0489">Methyltransferase</keyword>
<keyword id="KW-0539">Nucleus</keyword>
<keyword id="KW-0597">Phosphoprotein</keyword>
<keyword id="KW-1185">Reference proteome</keyword>
<keyword id="KW-0677">Repeat</keyword>
<keyword id="KW-0678">Repressor</keyword>
<keyword id="KW-0949">S-adenosyl-L-methionine</keyword>
<keyword id="KW-0804">Transcription</keyword>
<keyword id="KW-0805">Transcription regulation</keyword>
<keyword id="KW-0808">Transferase</keyword>
<keyword id="KW-0832">Ubl conjugation</keyword>
<keyword id="KW-0862">Zinc</keyword>
<keyword id="KW-0863">Zinc-finger</keyword>
<gene>
    <name type="primary">Dnmt1</name>
</gene>
<sequence>MPARTAPARVPALASPAGSLPDHVRRRLKDLERDGLTEKECVKEKLNLLHEFLQTEIKSQLCDLETKLHKEELSEEGYLAKVKTLLNKDLCLENGTLSLTQKANGCPANGSRPTWKAEMADSNRSPRSRPKPRGPRRSKSDSETMIEASSSSVATRRTTRQTTITSHFKGPAKRKPKEDSEKGNANESAAEERDQDKKRRVAGTESRASRAGESVEKPERVRPGTQLCQEEQGEQEDDRRPRRQTRELASRRKSREDPDREARPGTHLDVDDDDEKDKRSSRPRSQPRDLATKRRPKEEVEQITPEPPEGKDEDEREEKRRKTTRKKPEPLSIPVQSRVERKASQGKASAIPKLNPPQCPECGQYLDDPDLKYQQHPVDAVDEPQMLTNEALSVFDSNSSWFETYDSSPMHKFTFFSVYCSRGHLCPVDTGLIEKNVELYFSGVAKAIHEENPSVEGGVNGKNLGPINQWWISGFDGGEKALIGFSTAFAEYFLMEPSPEYAPIFGLMQEKIYISKIVVEFLQSNPDAVYEDLINKIETTVPPSAINVNRFTEDSLLRHAQFVVSQVESYDDAKDDDETPIFLSPCMRSLIHLAGVSLGQRRATRRTVINSAKVKRKGPTKATTTKLVYQIFDTFFSEQIEKDDKEDKENTMKRRRCGVCEVCQQPECGKCKACKDMVKFGGTGRSKQACLKRRCPNLAVKEADEDEEADDDIPELPSPKKLHQGKKKKQNKDRISWLGEPVKIEENRTYYWKVSIDEETLEVGDCVSVIPDDPSKPLYLARVTALWEDKNGQMFHAHWFCAGTDTVLGATSDPLELFLVGECENMQLSYIHSKVKVIYRGPSPNWAMEGGMDPEAMLPGAEDGKTYFYQFWYSQDYARFESPPKTQPAEDNKHKFCLSCIRLAELRQKEMPKVLEQLEEVDGRVYCSSITKNGVVYRLGDSVYLPPEAFTFNIKMASPMKRSKRDPVNENPVPRDTYRKYSDYIKGSNLDAPEPYRIGRIKEIYCGKKKGGKVNEADIKIRLYKFYRPENTHKSIQATYHADINLLYWSDEEAVVDFSDVQGRCTVEYGEDLLESIQDYSQGGPDRFYFLEAYNSKTKSFEDPPNHARSPGNKGKGKGKGKGKGKPQVSEPKEPEAAIKLPKLRTLDVFSGCGGLTEGFHQAGISETLWAIEMWEPAAQAFRLNNPGTTVFTEDCNVLLKLVMAGEVTNSLGQRLPQKGDVEMLCGGPPCQGFSGMNRFNSRTYSKFKNSLVVSFLSYCDYYRPRFFLLENVRNFVSFRRSMVLKLTLRCLVRMGYQCTFGVLQAGQYGVAQTRRRAIILAAAPGEKLPLFPEPLHVFAPRACQLSVVVDDKKFVSNITRLSSGPFRTITMRDTMSDLPEIQNGASAPEISYKWRATVLVPEAAARVALPAHPQGPYPQVHERAGGCRMRHIPLSPGSDWRDLPNIQVRLRDGVITNKLRYTFHDTKNGCSSTGALRGVCSCAEGKTCDPASRQFNTLIPWCLPHTGNRHNHWAGLYGRLEWDGFFSTTVTNPEPMGKQGRVLHPEQHRVVSVRECARSQGFPDTYRLFGNILDRHRQVGNAVPPPLAKAIGLEIKLCLLASAQESASAAVKGKEETTTED</sequence>
<feature type="chain" id="PRO_0000088036" description="DNA (cytosine-5)-methyltransferase 1">
    <location>
        <begin position="1"/>
        <end position="1622"/>
    </location>
</feature>
<feature type="domain" description="DMAP1-binding" evidence="8">
    <location>
        <begin position="16"/>
        <end position="109"/>
    </location>
</feature>
<feature type="domain" description="BAH 1" evidence="5">
    <location>
        <begin position="759"/>
        <end position="884"/>
    </location>
</feature>
<feature type="domain" description="BAH 2" evidence="5">
    <location>
        <begin position="977"/>
        <end position="1105"/>
    </location>
</feature>
<feature type="repeat" description="1">
    <location>
        <begin position="1114"/>
        <end position="1115"/>
    </location>
</feature>
<feature type="repeat" description="2">
    <location>
        <begin position="1116"/>
        <end position="1117"/>
    </location>
</feature>
<feature type="repeat" description="3">
    <location>
        <begin position="1118"/>
        <end position="1119"/>
    </location>
</feature>
<feature type="repeat" description="4">
    <location>
        <begin position="1120"/>
        <end position="1121"/>
    </location>
</feature>
<feature type="repeat" description="5">
    <location>
        <begin position="1122"/>
        <end position="1123"/>
    </location>
</feature>
<feature type="repeat" description="6">
    <location>
        <begin position="1124"/>
        <end position="1125"/>
    </location>
</feature>
<feature type="repeat" description="7; approximate">
    <location>
        <begin position="1126"/>
        <end position="1127"/>
    </location>
</feature>
<feature type="domain" description="SAM-dependent MTase C5-type" evidence="7">
    <location>
        <begin position="1144"/>
        <end position="1603"/>
    </location>
</feature>
<feature type="zinc finger region" description="CXXC-type" evidence="6">
    <location>
        <begin position="650"/>
        <end position="696"/>
    </location>
</feature>
<feature type="region of interest" description="Interaction with the PRC2/EED-EZH2 complex" evidence="1">
    <location>
        <begin position="1"/>
        <end position="342"/>
    </location>
</feature>
<feature type="region of interest" description="Interaction with DNMT3A" evidence="1">
    <location>
        <begin position="1"/>
        <end position="145"/>
    </location>
</feature>
<feature type="region of interest" description="Disordered" evidence="10">
    <location>
        <begin position="100"/>
        <end position="360"/>
    </location>
</feature>
<feature type="region of interest" description="Interaction with DNMT3B" evidence="1">
    <location>
        <begin position="146"/>
        <end position="213"/>
    </location>
</feature>
<feature type="region of interest" description="Interaction with the PRC2/EED-EZH2 complex" evidence="1">
    <location>
        <begin position="304"/>
        <end position="610"/>
    </location>
</feature>
<feature type="region of interest" description="DNA replication foci-targeting sequence">
    <location>
        <begin position="327"/>
        <end position="556"/>
    </location>
</feature>
<feature type="region of interest" description="Autoinhibitory linker">
    <location>
        <begin position="697"/>
        <end position="758"/>
    </location>
</feature>
<feature type="region of interest" description="Disordered" evidence="10">
    <location>
        <begin position="702"/>
        <end position="733"/>
    </location>
</feature>
<feature type="region of interest" description="Disordered" evidence="10">
    <location>
        <begin position="1099"/>
        <end position="1138"/>
    </location>
</feature>
<feature type="region of interest" description="7 X 2 AA tandem repeats of K-G">
    <location>
        <begin position="1114"/>
        <end position="1127"/>
    </location>
</feature>
<feature type="region of interest" description="Interaction with the PRC2/EED-EZH2 complex" evidence="1">
    <location>
        <begin position="1126"/>
        <end position="1622"/>
    </location>
</feature>
<feature type="region of interest" description="Catalytic">
    <location>
        <begin position="1144"/>
        <end position="1622"/>
    </location>
</feature>
<feature type="short sequence motif" description="Nuclear localization signal" evidence="4">
    <location>
        <begin position="173"/>
        <end position="200"/>
    </location>
</feature>
<feature type="compositionally biased region" description="Basic residues" evidence="10">
    <location>
        <begin position="126"/>
        <end position="137"/>
    </location>
</feature>
<feature type="compositionally biased region" description="Low complexity" evidence="10">
    <location>
        <begin position="149"/>
        <end position="166"/>
    </location>
</feature>
<feature type="compositionally biased region" description="Basic and acidic residues" evidence="10">
    <location>
        <begin position="176"/>
        <end position="197"/>
    </location>
</feature>
<feature type="compositionally biased region" description="Basic and acidic residues" evidence="10">
    <location>
        <begin position="207"/>
        <end position="222"/>
    </location>
</feature>
<feature type="compositionally biased region" description="Basic and acidic residues" evidence="10">
    <location>
        <begin position="237"/>
        <end position="269"/>
    </location>
</feature>
<feature type="compositionally biased region" description="Basic and acidic residues" evidence="10">
    <location>
        <begin position="276"/>
        <end position="300"/>
    </location>
</feature>
<feature type="compositionally biased region" description="Acidic residues" evidence="10">
    <location>
        <begin position="703"/>
        <end position="714"/>
    </location>
</feature>
<feature type="compositionally biased region" description="Basic residues" evidence="10">
    <location>
        <begin position="720"/>
        <end position="731"/>
    </location>
</feature>
<feature type="compositionally biased region" description="Basic residues" evidence="10">
    <location>
        <begin position="1115"/>
        <end position="1125"/>
    </location>
</feature>
<feature type="active site" evidence="7 9">
    <location>
        <position position="1231"/>
    </location>
</feature>
<feature type="binding site" evidence="1">
    <location>
        <position position="359"/>
    </location>
    <ligand>
        <name>Zn(2+)</name>
        <dbReference type="ChEBI" id="CHEBI:29105"/>
    </ligand>
</feature>
<feature type="binding site" evidence="1">
    <location>
        <position position="362"/>
    </location>
    <ligand>
        <name>Zn(2+)</name>
        <dbReference type="ChEBI" id="CHEBI:29105"/>
    </ligand>
</feature>
<feature type="binding site" evidence="1">
    <location>
        <position position="420"/>
    </location>
    <ligand>
        <name>Zn(2+)</name>
        <dbReference type="ChEBI" id="CHEBI:29105"/>
    </ligand>
</feature>
<feature type="binding site" evidence="1">
    <location>
        <position position="424"/>
    </location>
    <ligand>
        <name>Zn(2+)</name>
        <dbReference type="ChEBI" id="CHEBI:29105"/>
    </ligand>
</feature>
<feature type="binding site" evidence="6">
    <location>
        <position position="657"/>
    </location>
    <ligand>
        <name>Zn(2+)</name>
        <dbReference type="ChEBI" id="CHEBI:29105"/>
        <label>1</label>
    </ligand>
</feature>
<feature type="binding site" evidence="6">
    <location>
        <position position="660"/>
    </location>
    <ligand>
        <name>Zn(2+)</name>
        <dbReference type="ChEBI" id="CHEBI:29105"/>
        <label>1</label>
    </ligand>
</feature>
<feature type="binding site" evidence="6">
    <location>
        <position position="663"/>
    </location>
    <ligand>
        <name>Zn(2+)</name>
        <dbReference type="ChEBI" id="CHEBI:29105"/>
        <label>1</label>
    </ligand>
</feature>
<feature type="binding site" evidence="6">
    <location>
        <position position="668"/>
    </location>
    <ligand>
        <name>Zn(2+)</name>
        <dbReference type="ChEBI" id="CHEBI:29105"/>
        <label>2</label>
    </ligand>
</feature>
<feature type="binding site" evidence="6">
    <location>
        <position position="671"/>
    </location>
    <ligand>
        <name>Zn(2+)</name>
        <dbReference type="ChEBI" id="CHEBI:29105"/>
        <label>2</label>
    </ligand>
</feature>
<feature type="binding site" evidence="6">
    <location>
        <position position="674"/>
    </location>
    <ligand>
        <name>Zn(2+)</name>
        <dbReference type="ChEBI" id="CHEBI:29105"/>
        <label>2</label>
    </ligand>
</feature>
<feature type="binding site" evidence="6">
    <location>
        <position position="690"/>
    </location>
    <ligand>
        <name>Zn(2+)</name>
        <dbReference type="ChEBI" id="CHEBI:29105"/>
        <label>2</label>
    </ligand>
</feature>
<feature type="binding site" evidence="6">
    <location>
        <position position="695"/>
    </location>
    <ligand>
        <name>Zn(2+)</name>
        <dbReference type="ChEBI" id="CHEBI:29105"/>
        <label>1</label>
    </ligand>
</feature>
<feature type="binding site" evidence="2">
    <location>
        <position position="1151"/>
    </location>
    <ligand>
        <name>S-adenosyl-L-methionine</name>
        <dbReference type="ChEBI" id="CHEBI:59789"/>
    </ligand>
</feature>
<feature type="binding site" evidence="2">
    <location>
        <begin position="1155"/>
        <end position="1156"/>
    </location>
    <ligand>
        <name>S-adenosyl-L-methionine</name>
        <dbReference type="ChEBI" id="CHEBI:59789"/>
    </ligand>
</feature>
<feature type="binding site" evidence="3">
    <location>
        <begin position="1173"/>
        <end position="1174"/>
    </location>
    <ligand>
        <name>S-adenosyl-L-methionine</name>
        <dbReference type="ChEBI" id="CHEBI:59789"/>
    </ligand>
</feature>
<feature type="binding site" evidence="2">
    <location>
        <begin position="1195"/>
        <end position="1196"/>
    </location>
    <ligand>
        <name>S-adenosyl-L-methionine</name>
        <dbReference type="ChEBI" id="CHEBI:59789"/>
    </ligand>
</feature>
<feature type="binding site" evidence="3">
    <location>
        <position position="1196"/>
    </location>
    <ligand>
        <name>S-adenosyl-L-methionine</name>
        <dbReference type="ChEBI" id="CHEBI:59789"/>
    </ligand>
</feature>
<feature type="binding site" evidence="3">
    <location>
        <position position="1582"/>
    </location>
    <ligand>
        <name>S-adenosyl-L-methionine</name>
        <dbReference type="ChEBI" id="CHEBI:59789"/>
    </ligand>
</feature>
<feature type="binding site" evidence="2">
    <location>
        <position position="1584"/>
    </location>
    <ligand>
        <name>S-adenosyl-L-methionine</name>
        <dbReference type="ChEBI" id="CHEBI:59789"/>
    </ligand>
</feature>
<feature type="site" description="Important for activity" evidence="1">
    <location>
        <position position="515"/>
    </location>
</feature>
<feature type="modified residue" description="Phosphoserine" evidence="12">
    <location>
        <position position="15"/>
    </location>
</feature>
<feature type="modified residue" description="N6,N6-dimethyllysine; by EHMT2" evidence="3">
    <location>
        <position position="70"/>
    </location>
</feature>
<feature type="modified residue" description="Phosphoserine" evidence="2">
    <location>
        <position position="138"/>
    </location>
</feature>
<feature type="modified residue" description="N6-methyllysine; by SETD7" evidence="3">
    <location>
        <position position="139"/>
    </location>
</feature>
<feature type="modified residue" description="Phosphoserine; by PKB/AKT1" evidence="3">
    <location>
        <position position="140"/>
    </location>
</feature>
<feature type="modified residue" description="Phosphoserine" evidence="3">
    <location>
        <position position="149"/>
    </location>
</feature>
<feature type="modified residue" description="Phosphoserine" evidence="3">
    <location>
        <position position="151"/>
    </location>
</feature>
<feature type="modified residue" description="Phosphothreonine" evidence="3">
    <location>
        <position position="163"/>
    </location>
</feature>
<feature type="modified residue" description="N6-acetyllysine" evidence="3">
    <location>
        <position position="169"/>
    </location>
</feature>
<feature type="modified residue" description="Phosphothreonine" evidence="12">
    <location>
        <position position="304"/>
    </location>
</feature>
<feature type="modified residue" description="N6-acetyllysine" evidence="3">
    <location>
        <position position="372"/>
    </location>
</feature>
<feature type="modified residue" description="Phosphoserine" evidence="3">
    <location>
        <position position="400"/>
    </location>
</feature>
<feature type="modified residue" description="Phosphoserine" evidence="2">
    <location>
        <position position="515"/>
    </location>
</feature>
<feature type="modified residue" description="Phosphoserine" evidence="3">
    <location>
        <position position="555"/>
    </location>
</feature>
<feature type="modified residue" description="Phosphoserine" evidence="12">
    <location>
        <position position="718"/>
    </location>
</feature>
<feature type="modified residue" description="Phosphoserine" evidence="3">
    <location>
        <position position="736"/>
    </location>
</feature>
<feature type="modified residue" description="N6-acetyllysine" evidence="3">
    <location>
        <position position="753"/>
    </location>
</feature>
<feature type="modified residue" description="Phosphoserine" evidence="3">
    <location>
        <position position="882"/>
    </location>
</feature>
<feature type="modified residue" description="N6-acetyllysine" evidence="3">
    <location>
        <position position="895"/>
    </location>
</feature>
<feature type="modified residue" description="N6-acetyllysine" evidence="3">
    <location>
        <position position="961"/>
    </location>
</feature>
<feature type="modified residue" description="N6-acetyllysine" evidence="3">
    <location>
        <position position="980"/>
    </location>
</feature>
<feature type="modified residue" description="N6-acetyllysine" evidence="3">
    <location>
        <position position="1116"/>
    </location>
</feature>
<feature type="modified residue" description="N6-acetyllysine" evidence="3">
    <location>
        <position position="1118"/>
    </location>
</feature>
<feature type="modified residue" description="N6-acetyllysine" evidence="3">
    <location>
        <position position="1120"/>
    </location>
</feature>
<feature type="modified residue" description="N6-acetyllysine" evidence="3">
    <location>
        <position position="1122"/>
    </location>
</feature>
<feature type="modified residue" description="N6-acetyllysine" evidence="2">
    <location>
        <position position="1124"/>
    </location>
</feature>
<feature type="modified residue" description="N6-acetyllysine" evidence="2">
    <location>
        <position position="1126"/>
    </location>
</feature>
<feature type="modified residue" description="N6-acetyllysine" evidence="3">
    <location>
        <position position="1354"/>
    </location>
</feature>
<feature type="modified residue" description="Phosphoserine" evidence="12">
    <location>
        <position position="1436"/>
    </location>
</feature>
<feature type="cross-link" description="Glycyl lysine isopeptide (Lys-Gly) (interchain with G-Cter in SUMO2)" evidence="3">
    <location>
        <position position="1613"/>
    </location>
</feature>
<feature type="splice variant" id="VSP_005620" description="In isoform 9." evidence="11">
    <location>
        <begin position="1"/>
        <end position="118"/>
    </location>
</feature>
<feature type="splice variant" id="VSP_005622" description="In isoform 6." evidence="11">
    <location>
        <begin position="1202"/>
        <end position="1410"/>
    </location>
</feature>
<feature type="splice variant" id="VSP_005623" description="In isoform 8." evidence="11">
    <location>
        <begin position="1216"/>
        <end position="1504"/>
    </location>
</feature>
<feature type="splice variant" id="VSP_005621" description="In isoform 5." evidence="11">
    <original>QKGDVEMLCGGPPCQGFSGMNRFNSRTYSKFKNSLVVSFLSYCDYYRPRFFLLENVRNFVSFRRSMVLKLTLRCLVRMGYQCTFGVLQAGQYGVAQTRRRAIILAAAPGEKLPLFPEPLHVFAPRACQLSVVVDDKKFVSNITRLSSGPFRTITMRDTMSDLPEIQNGASAPEISYKWRATVLVPEAAARVALPAHPQGPYPQVHERAGGCRM</original>
    <variation>VC</variation>
    <location>
        <begin position="1218"/>
        <end position="1430"/>
    </location>
</feature>
<feature type="splice variant" id="VSP_005624" description="In isoform 4." evidence="11">
    <location>
        <begin position="1226"/>
        <end position="1477"/>
    </location>
</feature>
<feature type="splice variant" id="VSP_005625" description="In isoform 3." evidence="11">
    <location>
        <begin position="1252"/>
        <end position="1482"/>
    </location>
</feature>
<feature type="splice variant" id="VSP_005626" description="In isoform 7." evidence="11">
    <location>
        <begin position="1259"/>
        <end position="1481"/>
    </location>
</feature>
<feature type="splice variant" id="VSP_005627" description="In isoform 2." evidence="11">
    <location>
        <begin position="1323"/>
        <end position="1403"/>
    </location>
</feature>
<feature type="sequence conflict" description="In Ref. 3; BAA20854." evidence="11" ref="3">
    <original>AGSLPDHVR</original>
    <variation>RQARPRPCP</variation>
    <location>
        <begin position="17"/>
        <end position="25"/>
    </location>
</feature>
<feature type="sequence conflict" description="In Ref. 3; BAA20854." evidence="11" ref="3">
    <original>A</original>
    <variation>V</variation>
    <location>
        <position position="189"/>
    </location>
</feature>
<feature type="sequence conflict" description="In Ref. 1; BAA37118." evidence="11" ref="1">
    <original>F</original>
    <variation>S</variation>
    <location>
        <position position="1276"/>
    </location>
</feature>
<feature type="sequence conflict" description="In Ref. 4; AAD28102." evidence="11" ref="4">
    <original>T</original>
    <variation>I</variation>
    <location>
        <position position="1300"/>
    </location>
</feature>
<feature type="sequence conflict" description="In Ref. 1; BAA37118." evidence="11" ref="1">
    <original>M</original>
    <variation>V</variation>
    <location>
        <position position="1372"/>
    </location>
</feature>
<feature type="sequence conflict" description="In Ref. 1; BAA37118." evidence="11" ref="1">
    <original>KWRATVLVPEAAARVALPAHPQGPYPQVHERAGGC</original>
    <variation>NGEPQSWFQRQLRGSHYQPILRDHICKDMSALVAA</variation>
    <location>
        <begin position="1394"/>
        <end position="1428"/>
    </location>
</feature>
<proteinExistence type="evidence at protein level"/>
<protein>
    <recommendedName>
        <fullName>DNA (cytosine-5)-methyltransferase 1</fullName>
        <shortName>Dnmt1</shortName>
        <ecNumber>2.1.1.37</ecNumber>
    </recommendedName>
    <alternativeName>
        <fullName>DNA MTase RnoIP</fullName>
        <shortName>M.RnoIP</shortName>
    </alternativeName>
    <alternativeName>
        <fullName>DNA methyltransferase I</fullName>
    </alternativeName>
    <alternativeName>
        <fullName>MCMT</fullName>
    </alternativeName>
</protein>
<reference key="1">
    <citation type="journal article" date="1998" name="Biochem. Biophys. Res. Commun.">
        <title>Expression of rat DNA (cytosine-5) methyltransferase (DNA MTase) in rodent trophoblast giant cells: molecular cloning and characterization of rat DNA MTase.</title>
        <authorList>
            <person name="Kimura H."/>
            <person name="Takeda T."/>
            <person name="Tanaka S."/>
            <person name="Ogawa T."/>
            <person name="Shiota K."/>
        </authorList>
    </citation>
    <scope>NUCLEOTIDE SEQUENCE [MRNA] (ISOFORM 1)</scope>
    <source>
        <strain>Sprague-Dawley</strain>
        <tissue>Brain</tissue>
        <tissue>Placenta</tissue>
    </source>
</reference>
<reference key="2">
    <citation type="submission" date="1998-12" db="EMBL/GenBank/DDBJ databases">
        <title>Multiple N-terminal isoforms of DNA (cytosine-5-)-methyltransferase in vivo.</title>
        <authorList>
            <person name="Deng J."/>
            <person name="Szyf M."/>
        </authorList>
    </citation>
    <scope>NUCLEOTIDE SEQUENCE OF 1-144 (ISOFORMS 1 AND 9)</scope>
    <source>
        <tissue>Brain</tissue>
    </source>
</reference>
<reference key="3">
    <citation type="journal article" date="1996" name="J. Neurochem.">
        <title>Molecular cloning and characterization of annexin V-binding proteins with highly hydrophilic peptide structure.</title>
        <authorList>
            <person name="Ohsawa K."/>
            <person name="Imai Y."/>
            <person name="Ito D."/>
            <person name="Kohsaka S."/>
        </authorList>
    </citation>
    <scope>NUCLEOTIDE SEQUENCE [MRNA] OF 17-356</scope>
    <scope>IN VITRO BINDING TO ANNEXIN V</scope>
    <source>
        <strain>Wistar</strain>
        <tissue>Brain</tissue>
    </source>
</reference>
<reference key="4">
    <citation type="journal article" date="1998" name="J. Biol. Chem.">
        <title>Multiple isoforms of DNA methyltransferase are encoded by the vertebrate cytosine DNA methyltransferase gene.</title>
        <authorList>
            <person name="Deng J."/>
            <person name="Szyf M."/>
        </authorList>
    </citation>
    <scope>NUCLEOTIDE SEQUENCE [GENOMIC DNA] OF 1169-1517 (ISOFORMS 1; 2; 3; 4; 5; 6; 7 AND 8)</scope>
</reference>
<reference key="5">
    <citation type="journal article" date="2012" name="Nat. Commun.">
        <title>Quantitative maps of protein phosphorylation sites across 14 different rat organs and tissues.</title>
        <authorList>
            <person name="Lundby A."/>
            <person name="Secher A."/>
            <person name="Lage K."/>
            <person name="Nordsborg N.B."/>
            <person name="Dmytriyev A."/>
            <person name="Lundby C."/>
            <person name="Olsen J.V."/>
        </authorList>
    </citation>
    <scope>PHOSPHORYLATION [LARGE SCALE ANALYSIS] AT SER-15; THR-304; SER-718 AND SER-1436</scope>
    <scope>IDENTIFICATION BY MASS SPECTROMETRY [LARGE SCALE ANALYSIS]</scope>
</reference>
<evidence type="ECO:0000250" key="1"/>
<evidence type="ECO:0000250" key="2">
    <source>
        <dbReference type="UniProtKB" id="P13864"/>
    </source>
</evidence>
<evidence type="ECO:0000250" key="3">
    <source>
        <dbReference type="UniProtKB" id="P26358"/>
    </source>
</evidence>
<evidence type="ECO:0000255" key="4"/>
<evidence type="ECO:0000255" key="5">
    <source>
        <dbReference type="PROSITE-ProRule" id="PRU00370"/>
    </source>
</evidence>
<evidence type="ECO:0000255" key="6">
    <source>
        <dbReference type="PROSITE-ProRule" id="PRU00509"/>
    </source>
</evidence>
<evidence type="ECO:0000255" key="7">
    <source>
        <dbReference type="PROSITE-ProRule" id="PRU01016"/>
    </source>
</evidence>
<evidence type="ECO:0000255" key="8">
    <source>
        <dbReference type="PROSITE-ProRule" id="PRU01260"/>
    </source>
</evidence>
<evidence type="ECO:0000255" key="9">
    <source>
        <dbReference type="PROSITE-ProRule" id="PRU10018"/>
    </source>
</evidence>
<evidence type="ECO:0000256" key="10">
    <source>
        <dbReference type="SAM" id="MobiDB-lite"/>
    </source>
</evidence>
<evidence type="ECO:0000305" key="11"/>
<evidence type="ECO:0007744" key="12">
    <source>
    </source>
</evidence>
<comment type="function">
    <text evidence="3">Methylates CpG residues. Preferentially methylates hemimethylated DNA. Associates with DNA replication sites in S phase maintaining the methylation pattern in the newly synthesized strand, that is essential for epigenetic inheritance. Associates with chromatin during G2 and M phases to maintain DNA methylation independently of replication. It is responsible for maintaining methylation patterns established in development. DNA methylation is coordinated with methylation of histones. Mediates transcriptional repression by direct binding to HDAC2. In association with DNMT3B and via the recruitment of CTCFL/BORIS, involved in activation of BAG1 gene expression by modulating dimethylation of promoter histone H3 at H3K4 and H3K9. Probably forms a corepressor complex required for activated KRAS-mediated promoter hypermethylation and transcriptional silencing of tumor suppressor genes (TSGs) or other tumor-related genes in colorectal cancer (CRC) cells. Also required to maintain a transcriptionally repressive state of genes in undifferentiated embryonic stem cells (ESCs). Associates at promoter regions of tumor suppressor genes (TSGs) leading to their gene silencing. Promotes tumor growth.</text>
</comment>
<comment type="catalytic activity">
    <reaction evidence="9">
        <text>a 2'-deoxycytidine in DNA + S-adenosyl-L-methionine = a 5-methyl-2'-deoxycytidine in DNA + S-adenosyl-L-homocysteine + H(+)</text>
        <dbReference type="Rhea" id="RHEA:13681"/>
        <dbReference type="Rhea" id="RHEA-COMP:11369"/>
        <dbReference type="Rhea" id="RHEA-COMP:11370"/>
        <dbReference type="ChEBI" id="CHEBI:15378"/>
        <dbReference type="ChEBI" id="CHEBI:57856"/>
        <dbReference type="ChEBI" id="CHEBI:59789"/>
        <dbReference type="ChEBI" id="CHEBI:85452"/>
        <dbReference type="ChEBI" id="CHEBI:85454"/>
        <dbReference type="EC" id="2.1.1.37"/>
    </reaction>
</comment>
<comment type="subunit">
    <text evidence="2 3">Homodimer. Forms a stable complex with E2F1, BB1 and HDAC1. Forms a complex with DMAP1 and HDAC2, with direct interaction. Interacts with the PRC2/EED-EZH2 complex. Probably part of a corepressor complex containing ZNF304, TRIM28, SETDB1 and DNMT1. Interacts with UHRF1; promoting its recruitment to hemimethylated DNA. Interacts with USP7, promoting its deubiquitination. Interacts with PCNA. Interacts with MBD2 and MBD3. Interacts with DNMT3A and DNMT3B. Interacts with UBC9 (By similarity). Interacts with CSNK1D (By similarity). Interacts with HDAC1 (By similarity). Interacts with BAZ2A/TIP5 (By similarity). Interacts with SIRT7 (By similarity). Interacts with ZNF263; recruited to the SIX3 promoter along with other proteins involved in chromatin modification and transcriptional corepression where it contributes to transcriptional repression (By similarity). Interacts with L3MBTL3 and DCAF5; the interaction requires DNMT1 methylation at Lys-139 and is necessary to target DNMT1 for ubiquitination by the CRL4-DCAF5 E3 ubiquitin ligase complex and proteasomal degradation (By similarity). Interacts with PHF20L1; the interaction requires DNMT1 methylation at Lys-139 and protects DNMT1 from ubiquitination and proteasomal degradation (By similarity).</text>
</comment>
<comment type="subcellular location">
    <subcellularLocation>
        <location>Nucleus</location>
    </subcellularLocation>
</comment>
<comment type="alternative products">
    <event type="alternative splicing"/>
    <isoform>
        <id>Q9Z330-1</id>
        <name>1</name>
        <sequence type="displayed"/>
    </isoform>
    <isoform>
        <id>Q9Z330-2</id>
        <name>2</name>
        <name>SF1</name>
        <sequence type="described" ref="VSP_005627"/>
    </isoform>
    <isoform>
        <id>Q9Z330-3</id>
        <name>3</name>
        <name>SF2</name>
        <sequence type="described" ref="VSP_005625"/>
    </isoform>
    <isoform>
        <id>Q9Z330-4</id>
        <name>4</name>
        <name>SF3</name>
        <sequence type="described" ref="VSP_005624"/>
    </isoform>
    <isoform>
        <id>Q9Z330-5</id>
        <name>5</name>
        <name>SF4</name>
        <sequence type="described" ref="VSP_005621"/>
    </isoform>
    <isoform>
        <id>Q9Z330-6</id>
        <name>6</name>
        <name>SF5</name>
        <sequence type="described" ref="VSP_005622"/>
    </isoform>
    <isoform>
        <id>Q9Z330-7</id>
        <name>7</name>
        <name>SF6</name>
        <sequence type="described" ref="VSP_005626"/>
    </isoform>
    <isoform>
        <id>Q9Z330-8</id>
        <name>8</name>
        <name>SF7</name>
        <sequence type="described" ref="VSP_005623"/>
    </isoform>
    <isoform>
        <id>Q9Z330-9</id>
        <name>9</name>
        <name>short</name>
        <sequence type="described" ref="VSP_005620"/>
    </isoform>
    <text>Additional isoforms seem to exist.</text>
</comment>
<comment type="tissue specificity">
    <text>Isoforms 0 and 8 are highly expressed in placenta, brain, lung, spleen, kidney, heart, and at much lower levels in liver. Isoform 1 is expressed in cerebellum, isoform 2 in muscle and testis, isoform 3 in lung, isoform 4 in spleen and brain, and isoform 5 in brain.</text>
</comment>
<comment type="domain">
    <text>The N-terminal part is required for homodimerization and acts as a regulatory domain.</text>
</comment>
<comment type="domain">
    <text evidence="3">The CXXC-type zinc finger specifically binds to unmethylated CpG dinucleotides, positioning the autoinhibitory linker between the DNA and the active site, thus providing a mechanism to ensure that only hemimethylated CpG dinucleotides undergo methylation.</text>
</comment>
<comment type="PTM">
    <text evidence="3">Sumoylated; sumoylation increases activity.</text>
</comment>
<comment type="PTM">
    <text evidence="3">Acetylation on multiple lysines, mainly by KAT2B/PCAF, regulates cell cycle G(2)/M transition. Deacetylation of Lys-1116 and Lys-1354 by SIRT1 increases methyltransferase activity.</text>
</comment>
<comment type="PTM">
    <text evidence="3">Phosphorylation of Ser-151 by CDKs is important for enzymatic activity and protein stability. Phosphorylation of Ser-140 by AKT1 prevents methylation by SETD7 thereby increasing DNMT1 stability.</text>
</comment>
<comment type="PTM">
    <text evidence="3">Methylation at Lys-139 by SETD7 is necessary for the regulation of DNMT1 proteasomal degradation.</text>
</comment>
<comment type="PTM">
    <text evidence="2">Ubiquitinated by UHRF1; interaction with USP7 counteracts ubiquitination by UHRF1 by promoting deubiquitination and preventing degradation by the proteasome.</text>
</comment>
<comment type="similarity">
    <text evidence="7">Belongs to the class I-like SAM-binding methyltransferase superfamily. C5-methyltransferase family.</text>
</comment>
<accession>Q9Z330</accession>
<accession>P70487</accession>
<accession>Q9R252</accession>
<accession>Q9WTX3</accession>
<accession>Q9WU57</accession>